<dbReference type="EMBL" id="L28147">
    <property type="protein sequence ID" value="AAA36983.1"/>
    <property type="molecule type" value="mRNA"/>
</dbReference>
<dbReference type="PIR" id="A56535">
    <property type="entry name" value="A56535"/>
</dbReference>
<dbReference type="SMR" id="Q60465"/>
<dbReference type="GO" id="GO:0005789">
    <property type="term" value="C:endoplasmic reticulum membrane"/>
    <property type="evidence" value="ECO:0007669"/>
    <property type="project" value="UniProtKB-SubCell"/>
</dbReference>
<dbReference type="GO" id="GO:0005741">
    <property type="term" value="C:mitochondrial outer membrane"/>
    <property type="evidence" value="ECO:0007669"/>
    <property type="project" value="UniProtKB-SubCell"/>
</dbReference>
<dbReference type="GO" id="GO:0000164">
    <property type="term" value="C:protein phosphatase type 1 complex"/>
    <property type="evidence" value="ECO:0007669"/>
    <property type="project" value="TreeGrafter"/>
</dbReference>
<dbReference type="GO" id="GO:0019888">
    <property type="term" value="F:protein phosphatase regulator activity"/>
    <property type="evidence" value="ECO:0007669"/>
    <property type="project" value="TreeGrafter"/>
</dbReference>
<dbReference type="GO" id="GO:0006915">
    <property type="term" value="P:apoptotic process"/>
    <property type="evidence" value="ECO:0007669"/>
    <property type="project" value="UniProtKB-KW"/>
</dbReference>
<dbReference type="GO" id="GO:0006417">
    <property type="term" value="P:regulation of translation"/>
    <property type="evidence" value="ECO:0007669"/>
    <property type="project" value="UniProtKB-KW"/>
</dbReference>
<dbReference type="GO" id="GO:0034976">
    <property type="term" value="P:response to endoplasmic reticulum stress"/>
    <property type="evidence" value="ECO:0007669"/>
    <property type="project" value="TreeGrafter"/>
</dbReference>
<dbReference type="InterPro" id="IPR051254">
    <property type="entry name" value="PPP1R15"/>
</dbReference>
<dbReference type="InterPro" id="IPR019523">
    <property type="entry name" value="Prot_Pase1_reg-su15A/B_C"/>
</dbReference>
<dbReference type="PANTHER" id="PTHR16489">
    <property type="entry name" value="GH11727P"/>
    <property type="match status" value="1"/>
</dbReference>
<dbReference type="PANTHER" id="PTHR16489:SF14">
    <property type="entry name" value="PROTEIN PHOSPHATASE 1 REGULATORY SUBUNIT 15A"/>
    <property type="match status" value="1"/>
</dbReference>
<dbReference type="Pfam" id="PF10488">
    <property type="entry name" value="PP1c_bdg"/>
    <property type="match status" value="1"/>
</dbReference>
<accession>Q60465</accession>
<gene>
    <name type="primary">Ppp1r15a</name>
    <name type="synonym">Gadd34</name>
    <name type="synonym">Myd116</name>
</gene>
<reference key="1">
    <citation type="journal article" date="1994" name="Mol. Cell. Biol.">
        <title>The gadd and MyD genes define a novel set of mammalian genes encoding acidic proteins that synergistically suppress cell growth.</title>
        <authorList>
            <person name="Zhan Q."/>
            <person name="Lord K.A."/>
            <person name="Alamo I. Jr."/>
            <person name="Hollander M.C."/>
            <person name="Carrier F."/>
            <person name="Ron D."/>
            <person name="Kohn K.W."/>
            <person name="Hoffman B."/>
            <person name="Liebermann D.A."/>
            <person name="Fornace A.J. Jr."/>
        </authorList>
    </citation>
    <scope>NUCLEOTIDE SEQUENCE [MRNA]</scope>
</reference>
<reference key="2">
    <citation type="journal article" date="2001" name="J. Cell Biol.">
        <title>Feedback inhibition of the unfolded protein response by GADD34-mediated dephosphorylation of eIF2alpha.</title>
        <authorList>
            <person name="Novoa I."/>
            <person name="Zeng H."/>
            <person name="Harding H.P."/>
            <person name="Ron D."/>
        </authorList>
    </citation>
    <scope>INTERACTION WITH PPP1CA</scope>
</reference>
<proteinExistence type="evidence at protein level"/>
<protein>
    <recommendedName>
        <fullName>Protein phosphatase 1 regulatory subunit 15A</fullName>
    </recommendedName>
    <alternativeName>
        <fullName>Growth arrest and DNA damage-inducible protein GADD34</fullName>
    </alternativeName>
    <alternativeName>
        <fullName>Myeloid differentiation primary response protein MyD116 homolog</fullName>
    </alternativeName>
</protein>
<name>PR15A_CRILO</name>
<organism>
    <name type="scientific">Cricetulus longicaudatus</name>
    <name type="common">Long-tailed dwarf hamster</name>
    <dbReference type="NCBI Taxonomy" id="10030"/>
    <lineage>
        <taxon>Eukaryota</taxon>
        <taxon>Metazoa</taxon>
        <taxon>Chordata</taxon>
        <taxon>Craniata</taxon>
        <taxon>Vertebrata</taxon>
        <taxon>Euteleostomi</taxon>
        <taxon>Mammalia</taxon>
        <taxon>Eutheria</taxon>
        <taxon>Euarchontoglires</taxon>
        <taxon>Glires</taxon>
        <taxon>Rodentia</taxon>
        <taxon>Myomorpha</taxon>
        <taxon>Muroidea</taxon>
        <taxon>Cricetidae</taxon>
        <taxon>Cricetinae</taxon>
        <taxon>Cricetulus</taxon>
    </lineage>
</organism>
<evidence type="ECO:0000250" key="1"/>
<evidence type="ECO:0000250" key="2">
    <source>
        <dbReference type="UniProtKB" id="O75807"/>
    </source>
</evidence>
<evidence type="ECO:0000256" key="3">
    <source>
        <dbReference type="SAM" id="MobiDB-lite"/>
    </source>
</evidence>
<evidence type="ECO:0000269" key="4">
    <source>
    </source>
</evidence>
<evidence type="ECO:0000305" key="5"/>
<comment type="function">
    <text evidence="2">Recruits the serine/threonine-protein phosphatase PPP1CA to prevents excessive phosphorylation of the translation initiation factor eIF-2A/EIF2S1, thereby reversing the shut-off of protein synthesis initiated by stress-inducible kinases and facilitating recovery of cells from stress. Down-regulates the TGF-beta signaling pathway by promoting dephosphorylation of TGFB1 by PP1. May promote apoptosis by inducing TP53 phosphorylation on 'Ser-15'. Plays an essential role in autophagy by tuning translation during starvation, thus enabling lysosomal biogenesis and a sustained autophagic flux.</text>
</comment>
<comment type="subunit">
    <text evidence="2 4">Interacts with PPP1CA (PubMed:11381086). Interacts with EIF2S1 (By similarity). Interacts with PCNA (By similarity). Interacts with LYN and KMT2A/MLL1. Interacts with PPP1R1A and SMARCB1. Interacts with SMAD7. Interacts with BAG1. Interacts with NOX4 (By similarity).</text>
</comment>
<comment type="subcellular location">
    <subcellularLocation>
        <location>Endoplasmic reticulum membrane</location>
        <topology>Peripheral membrane protein</topology>
        <orientation evidence="2">Cytoplasmic side</orientation>
    </subcellularLocation>
    <subcellularLocation>
        <location>Mitochondrion outer membrane</location>
        <topology>Peripheral membrane protein</topology>
        <orientation evidence="2">Cytoplasmic side</orientation>
    </subcellularLocation>
    <text evidence="2">Associates with membranes via an N-terminal amphipathic intramembrane region.</text>
</comment>
<comment type="PTM">
    <text evidence="2">Phosphorylated at multiple Ser/Thr residues. Phosphorylated on tyrosine by LYN; which impairs its antiproliferative activity. Phosphorylation at Tyr-234 enhances proteasomal degradation, this position is dephosphorylated by PTPN2.</text>
</comment>
<comment type="PTM">
    <text evidence="2">Polyubiquitinated. Exhibits a rapid proteasomal degradation with a half-life under 1 hour, ubiquitination depends on endoplasmic reticulum association.</text>
</comment>
<comment type="similarity">
    <text evidence="5">Belongs to the PPP1R15 family.</text>
</comment>
<keyword id="KW-0053">Apoptosis</keyword>
<keyword id="KW-0256">Endoplasmic reticulum</keyword>
<keyword id="KW-0472">Membrane</keyword>
<keyword id="KW-0496">Mitochondrion</keyword>
<keyword id="KW-1000">Mitochondrion outer membrane</keyword>
<keyword id="KW-0597">Phosphoprotein</keyword>
<keyword id="KW-0677">Repeat</keyword>
<keyword id="KW-0346">Stress response</keyword>
<keyword id="KW-0810">Translation regulation</keyword>
<keyword id="KW-0832">Ubl conjugation</keyword>
<feature type="chain" id="PRO_0000320517" description="Protein phosphatase 1 regulatory subunit 15A">
    <location>
        <begin position="1"/>
        <end position="590"/>
    </location>
</feature>
<feature type="topological domain" description="Cytoplasmic" evidence="2">
    <location>
        <begin position="1"/>
        <end position="21"/>
    </location>
</feature>
<feature type="intramembrane region" description="Helical" evidence="2">
    <location>
        <begin position="22"/>
        <end position="39"/>
    </location>
</feature>
<feature type="topological domain" description="Cytoplasmic" evidence="2">
    <location>
        <begin position="40"/>
        <end position="590"/>
    </location>
</feature>
<feature type="repeat" description="1">
    <location>
        <begin position="278"/>
        <end position="317"/>
    </location>
</feature>
<feature type="repeat" description="2">
    <location>
        <begin position="318"/>
        <end position="357"/>
    </location>
</feature>
<feature type="repeat" description="3">
    <location>
        <begin position="358"/>
        <end position="397"/>
    </location>
</feature>
<feature type="repeat" description="4; truncated">
    <location>
        <begin position="398"/>
        <end position="415"/>
    </location>
</feature>
<feature type="region of interest" description="Required for localization in the endoplasmic reticulum" evidence="2">
    <location>
        <begin position="1"/>
        <end position="60"/>
    </location>
</feature>
<feature type="region of interest" description="Disordered" evidence="3">
    <location>
        <begin position="57"/>
        <end position="138"/>
    </location>
</feature>
<feature type="region of interest" description="Disordered" evidence="3">
    <location>
        <begin position="154"/>
        <end position="273"/>
    </location>
</feature>
<feature type="region of interest" description="Interaction with SMAD7" evidence="1">
    <location>
        <begin position="278"/>
        <end position="460"/>
    </location>
</feature>
<feature type="region of interest" description="3.5 X 39 AA approximate repeats">
    <location>
        <begin position="278"/>
        <end position="452"/>
    </location>
</feature>
<feature type="region of interest" description="Disordered" evidence="3">
    <location>
        <begin position="286"/>
        <end position="387"/>
    </location>
</feature>
<feature type="region of interest" description="Disordered" evidence="3">
    <location>
        <begin position="422"/>
        <end position="441"/>
    </location>
</feature>
<feature type="region of interest" description="Interaction with KMT2A/MLL1" evidence="1">
    <location>
        <begin position="439"/>
        <end position="505"/>
    </location>
</feature>
<feature type="region of interest" description="Interaction with SMARCB1" evidence="1">
    <location>
        <begin position="486"/>
        <end position="533"/>
    </location>
</feature>
<feature type="compositionally biased region" description="Pro residues" evidence="3">
    <location>
        <begin position="62"/>
        <end position="71"/>
    </location>
</feature>
<feature type="compositionally biased region" description="Basic and acidic residues" evidence="3">
    <location>
        <begin position="110"/>
        <end position="124"/>
    </location>
</feature>
<feature type="compositionally biased region" description="Basic and acidic residues" evidence="3">
    <location>
        <begin position="203"/>
        <end position="218"/>
    </location>
</feature>
<feature type="compositionally biased region" description="Basic and acidic residues" evidence="3">
    <location>
        <begin position="236"/>
        <end position="248"/>
    </location>
</feature>
<feature type="compositionally biased region" description="Acidic residues" evidence="3">
    <location>
        <begin position="290"/>
        <end position="303"/>
    </location>
</feature>
<feature type="compositionally biased region" description="Acidic residues" evidence="3">
    <location>
        <begin position="330"/>
        <end position="343"/>
    </location>
</feature>
<feature type="modified residue" description="Phosphoserine" evidence="2">
    <location>
        <position position="135"/>
    </location>
</feature>
<feature type="modified residue" description="Phosphotyrosine" evidence="2">
    <location>
        <position position="234"/>
    </location>
</feature>
<feature type="modified residue" description="Phosphotyrosine" evidence="2">
    <location>
        <position position="365"/>
    </location>
</feature>
<feature type="modified residue" description="Phosphotyrosine" evidence="2">
    <location>
        <position position="462"/>
    </location>
</feature>
<sequence>MAPSPRPQHILLWRDAHSFHLLSPLMGFLSRAWSRLRVPEAPEPWPAETVTGADQIEADAHPAPPLVPENHPPQGEAEESGTPEEGKAAQGPCLDVQANSSPPETLGLSDDDKQGQDGPREQGRAHTAGLPILLSPGLQSADKSLGEVVAGEEGVTELAYPTSHWEGCPSEEEEDGETVKKAFRASADSPGHKSSTSVYCPGEAEHQATEEKQTENKADPPSSPSGSHSRAWEYCSKQEGEADPEPHRAGKYQLCQNAEAEEEEEAKVSSLSVSSGNAFLKAWVYRPGEDTEDDDDSDWGSAEEEGKALSSPTSPEHDFLKAWVYRPGEDTEDDDDSDWGSAEEEGKALSSPTSPEHDFLKAWVYRPGEDTEDDQDSDWGSAEKDGLAQTFATPHTSAFLKTWVCCPGEDTEDDDCEVVVPEDSEAADPDKSPSHEAQGCLPGEQTEGLVEAEHSLFQVAFYLPGEKPAPPWTAPKLPLRLQRRLTLLRTPTQDQDPETPLRARKVHFSENVTVHFLAVWAGPAQAARRGPWEQLARDRSRFARRIAQAEEKLGPYLTPAFRARAWARLGNPSLPLALEPICDHTFFPSQ</sequence>